<accession>W6QEK0</accession>
<protein>
    <recommendedName>
        <fullName evidence="5">FAD-linked oxidoreductase anuG</fullName>
        <ecNumber evidence="4">1.-.-.-</ecNumber>
    </recommendedName>
    <alternativeName>
        <fullName evidence="5">Annullatin D biosynthesis cluster protein G</fullName>
    </alternativeName>
</protein>
<name>ANUG_PENRF</name>
<dbReference type="EC" id="1.-.-.-" evidence="4"/>
<dbReference type="EMBL" id="HG792017">
    <property type="protein sequence ID" value="CDM34456.1"/>
    <property type="molecule type" value="Genomic_DNA"/>
</dbReference>
<dbReference type="SMR" id="W6QEK0"/>
<dbReference type="STRING" id="1365484.W6QEK0"/>
<dbReference type="OMA" id="TGSCGCV"/>
<dbReference type="OrthoDB" id="9996127at2759"/>
<dbReference type="Proteomes" id="UP000030686">
    <property type="component" value="Unassembled WGS sequence"/>
</dbReference>
<dbReference type="GO" id="GO:0071949">
    <property type="term" value="F:FAD binding"/>
    <property type="evidence" value="ECO:0007669"/>
    <property type="project" value="InterPro"/>
</dbReference>
<dbReference type="GO" id="GO:0016491">
    <property type="term" value="F:oxidoreductase activity"/>
    <property type="evidence" value="ECO:0007669"/>
    <property type="project" value="UniProtKB-KW"/>
</dbReference>
<dbReference type="Gene3D" id="3.30.465.10">
    <property type="match status" value="1"/>
</dbReference>
<dbReference type="Gene3D" id="3.40.462.20">
    <property type="match status" value="1"/>
</dbReference>
<dbReference type="Gene3D" id="3.30.43.10">
    <property type="entry name" value="Uridine Diphospho-n-acetylenolpyruvylglucosamine Reductase, domain 2"/>
    <property type="match status" value="1"/>
</dbReference>
<dbReference type="InterPro" id="IPR012951">
    <property type="entry name" value="BBE"/>
</dbReference>
<dbReference type="InterPro" id="IPR016166">
    <property type="entry name" value="FAD-bd_PCMH"/>
</dbReference>
<dbReference type="InterPro" id="IPR036318">
    <property type="entry name" value="FAD-bd_PCMH-like_sf"/>
</dbReference>
<dbReference type="InterPro" id="IPR016167">
    <property type="entry name" value="FAD-bd_PCMH_sub1"/>
</dbReference>
<dbReference type="InterPro" id="IPR016169">
    <property type="entry name" value="FAD-bd_PCMH_sub2"/>
</dbReference>
<dbReference type="InterPro" id="IPR050416">
    <property type="entry name" value="FAD-linked_Oxidoreductase"/>
</dbReference>
<dbReference type="InterPro" id="IPR006094">
    <property type="entry name" value="Oxid_FAD_bind_N"/>
</dbReference>
<dbReference type="PANTHER" id="PTHR42973">
    <property type="entry name" value="BINDING OXIDOREDUCTASE, PUTATIVE (AFU_ORTHOLOGUE AFUA_1G17690)-RELATED"/>
    <property type="match status" value="1"/>
</dbReference>
<dbReference type="PANTHER" id="PTHR42973:SF8">
    <property type="entry name" value="FAD-BINDING PCMH-TYPE DOMAIN-CONTAINING PROTEIN"/>
    <property type="match status" value="1"/>
</dbReference>
<dbReference type="Pfam" id="PF08031">
    <property type="entry name" value="BBE"/>
    <property type="match status" value="1"/>
</dbReference>
<dbReference type="Pfam" id="PF01565">
    <property type="entry name" value="FAD_binding_4"/>
    <property type="match status" value="1"/>
</dbReference>
<dbReference type="SUPFAM" id="SSF56176">
    <property type="entry name" value="FAD-binding/transporter-associated domain-like"/>
    <property type="match status" value="1"/>
</dbReference>
<dbReference type="PROSITE" id="PS51387">
    <property type="entry name" value="FAD_PCMH"/>
    <property type="match status" value="1"/>
</dbReference>
<evidence type="ECO:0000250" key="1">
    <source>
        <dbReference type="UniProtKB" id="Q5BEJ5"/>
    </source>
</evidence>
<evidence type="ECO:0000255" key="2"/>
<evidence type="ECO:0000255" key="3">
    <source>
        <dbReference type="PROSITE-ProRule" id="PRU00718"/>
    </source>
</evidence>
<evidence type="ECO:0000269" key="4">
    <source>
    </source>
</evidence>
<evidence type="ECO:0000303" key="5">
    <source>
    </source>
</evidence>
<evidence type="ECO:0000305" key="6"/>
<evidence type="ECO:0000305" key="7">
    <source>
    </source>
</evidence>
<gene>
    <name evidence="5" type="primary">anuG</name>
    <name type="ORF">PROQFM164_S03g001180</name>
</gene>
<feature type="signal peptide" evidence="2">
    <location>
        <begin position="1"/>
        <end position="21"/>
    </location>
</feature>
<feature type="chain" id="PRO_5004880149" description="FAD-linked oxidoreductase anuG">
    <location>
        <begin position="22"/>
        <end position="509"/>
    </location>
</feature>
<feature type="domain" description="FAD-binding PCMH-type" evidence="3">
    <location>
        <begin position="75"/>
        <end position="246"/>
    </location>
</feature>
<comment type="function">
    <text evidence="4 7">Cytochrome P450 monooxygenase; part of the gene cluster that mediates the biosynthesis of annullatin D, an alkylated aromatic polyketide with a fused dihydrobenzofuran lactone ring system that exhibits potent agonistic activities toward the cannabinoid receptors (PubMed:35939524). Within the pathway, anuG is responsible for the five-member lactone ring formation in (2S, 9S)-annullatin D via oxidative lactonization between the two hydroxyl groups (PubMed:35939524). The annullatin backbone 2-hydroxymethyl-3-pentylphenol is assembled from one acetyl-CoA starter unit and 5 malonyl-CoA elongation units by cooperation of the highly reducing polyketide synthase anuA, the short-chain dehydrogenase anuB and the oxidoreductase anuC, before being hydroxylated at the C-5 alkyl chain by the cytochrome P450 monooxygenase anuE to form (8S)-annullatin E. The prenyltransferase anuH subsequently installs one isoprenyl group at the benzene ring to form (8S)-annullatin J. Enzymatic or nonenzymatic dihydro-benzofuran ring formation between the prenyl and the phenolic hydroxyl groups in (8S)-annullatin J results in two diastereomers (2S,9S)-annullatin H and compound 12. The intermediate (2S,9S)-annullatin H is then converted to (2S,9S)-annullatin D by the FAD-linked oxidoreductase anuG-catalyzed five-member lactone ring formation. The isomer 12 acts as a substrate for the short-chain dehydrogenase anuF and is oxidized to (2R)-annullatin F, which is subsequently acetylated by an acetyltransferase leading to (2R)-annullatin G formation. The remaining enzymes identified within the cluster, anuD, anuI and anuJ, seem not to be involved in annullatin biosynthesis (Probable).</text>
</comment>
<comment type="catalytic activity">
    <reaction evidence="4">
        <text>(2S,9S)-annullatin H + 2 A = (2S,9S)-annullatin D + 2 AH2</text>
        <dbReference type="Rhea" id="RHEA:76435"/>
        <dbReference type="ChEBI" id="CHEBI:13193"/>
        <dbReference type="ChEBI" id="CHEBI:17499"/>
        <dbReference type="ChEBI" id="CHEBI:195223"/>
        <dbReference type="ChEBI" id="CHEBI:195224"/>
    </reaction>
    <physiologicalReaction direction="left-to-right" evidence="4">
        <dbReference type="Rhea" id="RHEA:76436"/>
    </physiologicalReaction>
</comment>
<comment type="cofactor">
    <cofactor evidence="1">
        <name>FAD</name>
        <dbReference type="ChEBI" id="CHEBI:57692"/>
    </cofactor>
</comment>
<comment type="pathway">
    <text evidence="4">Secondary metabolite biosynthesis.</text>
</comment>
<comment type="disruption phenotype">
    <text evidence="4">Abolished the production of (2S,9S)-annullatin D, but not that of (2R)-annullatin F, (2R)-annullatin G, and (2S,9S)-annullatin H.</text>
</comment>
<comment type="similarity">
    <text evidence="6">Belongs to the oxygen-dependent FAD-linked oxidoreductase family.</text>
</comment>
<keyword id="KW-0274">FAD</keyword>
<keyword id="KW-0285">Flavoprotein</keyword>
<keyword id="KW-0560">Oxidoreductase</keyword>
<keyword id="KW-1185">Reference proteome</keyword>
<keyword id="KW-0732">Signal</keyword>
<organism>
    <name type="scientific">Penicillium roqueforti (strain FM164)</name>
    <dbReference type="NCBI Taxonomy" id="1365484"/>
    <lineage>
        <taxon>Eukaryota</taxon>
        <taxon>Fungi</taxon>
        <taxon>Dikarya</taxon>
        <taxon>Ascomycota</taxon>
        <taxon>Pezizomycotina</taxon>
        <taxon>Eurotiomycetes</taxon>
        <taxon>Eurotiomycetidae</taxon>
        <taxon>Eurotiales</taxon>
        <taxon>Aspergillaceae</taxon>
        <taxon>Penicillium</taxon>
    </lineage>
</organism>
<proteinExistence type="evidence at protein level"/>
<sequence length="509" mass="56061">MVQISNVWGFGLAIMASLAAAAPKDCPDGLCLRTRANLSPLEVSQELGPLISNASSIFGPSDSRWANATARYQQYAAPKFTVVVRVARESDVSVIIKYANRNSLPFYAVNRGHGLPISQAKFSGLEIDMQLLTGITIQSNGKSALFQGGTYDQQVMDTLWEEGYVTTTGSCGCVGMLGPALGGGHGRQQGFHGLISDNILKLNVVLADGTTATVSNTSHTDLFWAMKGAGHNFGVVTSFEMSIYPTQVHSWYYKNYVFTQDKLEDLFEQLNVLQGNGTQPVKMAAQYGIYMMDSTVSATEAIIWWTFGYAGSQSEAQQYLTPFDDLNPLSSTDGNVPFPEVPNVQGTGINNATCDKGLERIVGPAGLQVYNATAQRQIYDLFNRNVKSYPELAASAVVMEGYSVEAVRKVDSDSSAYPMRDDYLLMQTTVSYSPNSTLDNVAIDWVTENQKFWNEGQPTRKPTAYVNYASGRESLEAMYGYEPWRLERLRKLKAKYDPEGRFSYYNPIV</sequence>
<reference key="1">
    <citation type="journal article" date="2014" name="Nat. Commun.">
        <title>Multiple recent horizontal transfers of a large genomic region in cheese making fungi.</title>
        <authorList>
            <person name="Cheeseman K."/>
            <person name="Ropars J."/>
            <person name="Renault P."/>
            <person name="Dupont J."/>
            <person name="Gouzy J."/>
            <person name="Branca A."/>
            <person name="Abraham A.-L."/>
            <person name="Ceppi M."/>
            <person name="Conseiller E."/>
            <person name="Debuchy R."/>
            <person name="Malagnac F."/>
            <person name="Goarin A."/>
            <person name="Silar P."/>
            <person name="Lacoste S."/>
            <person name="Sallet E."/>
            <person name="Bensimon A."/>
            <person name="Giraud T."/>
            <person name="Brygoo Y."/>
        </authorList>
    </citation>
    <scope>NUCLEOTIDE SEQUENCE [LARGE SCALE GENOMIC DNA]</scope>
    <source>
        <strain>FM164</strain>
    </source>
</reference>
<reference key="2">
    <citation type="journal article" date="2022" name="Org. Lett.">
        <title>Biosynthesis of Annullatin D in Penicillium roqueforti Implies Oxidative Lactonization between Two Hydroxyl Groups Catalyzed by a BBE-like Enzyme.</title>
        <authorList>
            <person name="Xiang P."/>
            <person name="Kemmerich B."/>
            <person name="Yang L."/>
            <person name="Li S.M."/>
        </authorList>
    </citation>
    <scope>FUNCTION</scope>
    <scope>CATALYTIC ACTIVITY</scope>
    <scope>DISRUPTION PHENOTYPE</scope>
    <scope>PATHWAY</scope>
</reference>